<name>KUP_SALDC</name>
<organism>
    <name type="scientific">Salmonella dublin (strain CT_02021853)</name>
    <dbReference type="NCBI Taxonomy" id="439851"/>
    <lineage>
        <taxon>Bacteria</taxon>
        <taxon>Pseudomonadati</taxon>
        <taxon>Pseudomonadota</taxon>
        <taxon>Gammaproteobacteria</taxon>
        <taxon>Enterobacterales</taxon>
        <taxon>Enterobacteriaceae</taxon>
        <taxon>Salmonella</taxon>
    </lineage>
</organism>
<feature type="chain" id="PRO_1000190277" description="Low affinity potassium transport system protein Kup">
    <location>
        <begin position="1"/>
        <end position="622"/>
    </location>
</feature>
<feature type="transmembrane region" description="Helical" evidence="1">
    <location>
        <begin position="9"/>
        <end position="29"/>
    </location>
</feature>
<feature type="transmembrane region" description="Helical" evidence="1">
    <location>
        <begin position="49"/>
        <end position="69"/>
    </location>
</feature>
<feature type="transmembrane region" description="Helical" evidence="1">
    <location>
        <begin position="103"/>
        <end position="123"/>
    </location>
</feature>
<feature type="transmembrane region" description="Helical" evidence="1">
    <location>
        <begin position="137"/>
        <end position="157"/>
    </location>
</feature>
<feature type="transmembrane region" description="Helical" evidence="1">
    <location>
        <begin position="165"/>
        <end position="185"/>
    </location>
</feature>
<feature type="transmembrane region" description="Helical" evidence="1">
    <location>
        <begin position="213"/>
        <end position="233"/>
    </location>
</feature>
<feature type="transmembrane region" description="Helical" evidence="1">
    <location>
        <begin position="247"/>
        <end position="267"/>
    </location>
</feature>
<feature type="transmembrane region" description="Helical" evidence="1">
    <location>
        <begin position="276"/>
        <end position="296"/>
    </location>
</feature>
<feature type="transmembrane region" description="Helical" evidence="1">
    <location>
        <begin position="337"/>
        <end position="357"/>
    </location>
</feature>
<feature type="transmembrane region" description="Helical" evidence="1">
    <location>
        <begin position="363"/>
        <end position="383"/>
    </location>
</feature>
<feature type="transmembrane region" description="Helical" evidence="1">
    <location>
        <begin position="396"/>
        <end position="416"/>
    </location>
</feature>
<feature type="transmembrane region" description="Helical" evidence="1">
    <location>
        <begin position="419"/>
        <end position="439"/>
    </location>
</feature>
<reference key="1">
    <citation type="journal article" date="2011" name="J. Bacteriol.">
        <title>Comparative genomics of 28 Salmonella enterica isolates: evidence for CRISPR-mediated adaptive sublineage evolution.</title>
        <authorList>
            <person name="Fricke W.F."/>
            <person name="Mammel M.K."/>
            <person name="McDermott P.F."/>
            <person name="Tartera C."/>
            <person name="White D.G."/>
            <person name="Leclerc J.E."/>
            <person name="Ravel J."/>
            <person name="Cebula T.A."/>
        </authorList>
    </citation>
    <scope>NUCLEOTIDE SEQUENCE [LARGE SCALE GENOMIC DNA]</scope>
    <source>
        <strain>CT_02021853</strain>
    </source>
</reference>
<protein>
    <recommendedName>
        <fullName evidence="1">Low affinity potassium transport system protein Kup</fullName>
    </recommendedName>
    <alternativeName>
        <fullName evidence="1">Kup system potassium uptake protein</fullName>
    </alternativeName>
</protein>
<keyword id="KW-0997">Cell inner membrane</keyword>
<keyword id="KW-1003">Cell membrane</keyword>
<keyword id="KW-0406">Ion transport</keyword>
<keyword id="KW-0472">Membrane</keyword>
<keyword id="KW-0630">Potassium</keyword>
<keyword id="KW-0633">Potassium transport</keyword>
<keyword id="KW-0769">Symport</keyword>
<keyword id="KW-0812">Transmembrane</keyword>
<keyword id="KW-1133">Transmembrane helix</keyword>
<keyword id="KW-0813">Transport</keyword>
<sequence length="622" mass="69301">MSTDNKQSLPAITLAAIGVVYGDIGTSPLYTLRECLSGQFGFGVERDAVFGFLSLIFWLLIFVVSIKYLTFVMRADNAGEGGILTLMSLAGRNTSARTTSMLVIMGLIGGSFFYGEVVITPAISVMSAIEGLEIVAPQLDTWIVPLSIIVLTLLFMIQKHGTGMVGKLFAPIMLTWFLILAVLGLRSIIANPEVLHALNPVWAVRFFLEYKTVSFIALGAVVLSITGVEALYADMGHFGKFPIRLAWFTVVLPSLVLNYFGQGALLLKHPEAIKNPFFLLAPDWALIPLLILAALATVIASQAVISGVFSLTRQAVRLGYLSPMRIIHTSEMESGQIYIPFVNWLLYFAVVVVIVSFEHSSNLAAAYGIAVTGTMVLTSILSTTVARKNWHWNKYFVALILIAFLCVDIPLFSANLDKLLSGGWLPLSLGLIMFTIMTTWKSERFRLLRRMHEHGNSLEAMIASLEKSPPVRVPGTAVYMSRALSVIPFALLHNLKHNKVLHERVILLTLRTEDAPYVHNVRRVQIEQLSPTFWRVVASYGWRETPNVEEVFHRCGLEGLSCRMMETSFFMSHESLIVGKRPWYLRLRGKLYLLLQRNALRAPDQFEIPPNRVIELGTQVEI</sequence>
<comment type="function">
    <text evidence="1">Responsible for the low-affinity transport of potassium into the cell. Likely operates as a K(+):H(+) symporter.</text>
</comment>
<comment type="catalytic activity">
    <reaction evidence="1">
        <text>K(+)(in) + H(+)(in) = K(+)(out) + H(+)(out)</text>
        <dbReference type="Rhea" id="RHEA:28490"/>
        <dbReference type="ChEBI" id="CHEBI:15378"/>
        <dbReference type="ChEBI" id="CHEBI:29103"/>
    </reaction>
    <physiologicalReaction direction="right-to-left" evidence="1">
        <dbReference type="Rhea" id="RHEA:28492"/>
    </physiologicalReaction>
</comment>
<comment type="subcellular location">
    <subcellularLocation>
        <location evidence="1">Cell inner membrane</location>
        <topology evidence="1">Multi-pass membrane protein</topology>
    </subcellularLocation>
</comment>
<comment type="similarity">
    <text evidence="1">Belongs to the HAK/KUP transporter (TC 2.A.72) family.</text>
</comment>
<gene>
    <name evidence="1" type="primary">kup</name>
    <name type="ordered locus">SeD_A4272</name>
</gene>
<accession>B5FN50</accession>
<dbReference type="EMBL" id="CP001144">
    <property type="protein sequence ID" value="ACH75332.1"/>
    <property type="molecule type" value="Genomic_DNA"/>
</dbReference>
<dbReference type="RefSeq" id="WP_000102338.1">
    <property type="nucleotide sequence ID" value="NC_011205.1"/>
</dbReference>
<dbReference type="KEGG" id="sed:SeD_A4272"/>
<dbReference type="HOGENOM" id="CLU_008142_4_2_6"/>
<dbReference type="Proteomes" id="UP000008322">
    <property type="component" value="Chromosome"/>
</dbReference>
<dbReference type="GO" id="GO:0005886">
    <property type="term" value="C:plasma membrane"/>
    <property type="evidence" value="ECO:0007669"/>
    <property type="project" value="UniProtKB-SubCell"/>
</dbReference>
<dbReference type="GO" id="GO:0015079">
    <property type="term" value="F:potassium ion transmembrane transporter activity"/>
    <property type="evidence" value="ECO:0007669"/>
    <property type="project" value="UniProtKB-UniRule"/>
</dbReference>
<dbReference type="GO" id="GO:0015293">
    <property type="term" value="F:symporter activity"/>
    <property type="evidence" value="ECO:0007669"/>
    <property type="project" value="UniProtKB-UniRule"/>
</dbReference>
<dbReference type="HAMAP" id="MF_01522">
    <property type="entry name" value="Kup"/>
    <property type="match status" value="1"/>
</dbReference>
<dbReference type="InterPro" id="IPR003855">
    <property type="entry name" value="K+_transporter"/>
</dbReference>
<dbReference type="InterPro" id="IPR053952">
    <property type="entry name" value="K_trans_C"/>
</dbReference>
<dbReference type="InterPro" id="IPR053951">
    <property type="entry name" value="K_trans_N"/>
</dbReference>
<dbReference type="InterPro" id="IPR023051">
    <property type="entry name" value="Kup"/>
</dbReference>
<dbReference type="NCBIfam" id="TIGR00794">
    <property type="entry name" value="kup"/>
    <property type="match status" value="1"/>
</dbReference>
<dbReference type="NCBIfam" id="NF008015">
    <property type="entry name" value="PRK10745.1"/>
    <property type="match status" value="1"/>
</dbReference>
<dbReference type="PANTHER" id="PTHR30540:SF79">
    <property type="entry name" value="LOW AFFINITY POTASSIUM TRANSPORT SYSTEM PROTEIN KUP"/>
    <property type="match status" value="1"/>
</dbReference>
<dbReference type="PANTHER" id="PTHR30540">
    <property type="entry name" value="OSMOTIC STRESS POTASSIUM TRANSPORTER"/>
    <property type="match status" value="1"/>
</dbReference>
<dbReference type="Pfam" id="PF02705">
    <property type="entry name" value="K_trans"/>
    <property type="match status" value="1"/>
</dbReference>
<dbReference type="Pfam" id="PF22776">
    <property type="entry name" value="K_trans_C"/>
    <property type="match status" value="1"/>
</dbReference>
<evidence type="ECO:0000255" key="1">
    <source>
        <dbReference type="HAMAP-Rule" id="MF_01522"/>
    </source>
</evidence>
<proteinExistence type="inferred from homology"/>